<comment type="function">
    <text evidence="1">Involved in the biosynthesis of branched-chain amino acids (BCAA). Catalyzes an alkyl-migration followed by a ketol-acid reduction of (S)-2-acetolactate (S2AL) to yield (R)-2,3-dihydroxy-isovalerate. In the isomerase reaction, S2AL is rearranged via a Mg-dependent methyl migration to produce 3-hydroxy-3-methyl-2-ketobutyrate (HMKB). In the reductase reaction, this 2-ketoacid undergoes a metal-dependent reduction by NADPH to yield (R)-2,3-dihydroxy-isovalerate.</text>
</comment>
<comment type="catalytic activity">
    <reaction evidence="1">
        <text>(2R)-2,3-dihydroxy-3-methylbutanoate + NADP(+) = (2S)-2-acetolactate + NADPH + H(+)</text>
        <dbReference type="Rhea" id="RHEA:22068"/>
        <dbReference type="ChEBI" id="CHEBI:15378"/>
        <dbReference type="ChEBI" id="CHEBI:49072"/>
        <dbReference type="ChEBI" id="CHEBI:57783"/>
        <dbReference type="ChEBI" id="CHEBI:58349"/>
        <dbReference type="ChEBI" id="CHEBI:58476"/>
        <dbReference type="EC" id="1.1.1.86"/>
    </reaction>
</comment>
<comment type="catalytic activity">
    <reaction evidence="1">
        <text>(2R,3R)-2,3-dihydroxy-3-methylpentanoate + NADP(+) = (S)-2-ethyl-2-hydroxy-3-oxobutanoate + NADPH + H(+)</text>
        <dbReference type="Rhea" id="RHEA:13493"/>
        <dbReference type="ChEBI" id="CHEBI:15378"/>
        <dbReference type="ChEBI" id="CHEBI:49256"/>
        <dbReference type="ChEBI" id="CHEBI:49258"/>
        <dbReference type="ChEBI" id="CHEBI:57783"/>
        <dbReference type="ChEBI" id="CHEBI:58349"/>
        <dbReference type="EC" id="1.1.1.86"/>
    </reaction>
</comment>
<comment type="cofactor">
    <cofactor evidence="1">
        <name>Mg(2+)</name>
        <dbReference type="ChEBI" id="CHEBI:18420"/>
    </cofactor>
    <text evidence="1">Binds 2 magnesium ions per subunit.</text>
</comment>
<comment type="pathway">
    <text evidence="1">Amino-acid biosynthesis; L-isoleucine biosynthesis; L-isoleucine from 2-oxobutanoate: step 2/4.</text>
</comment>
<comment type="pathway">
    <text evidence="1">Amino-acid biosynthesis; L-valine biosynthesis; L-valine from pyruvate: step 2/4.</text>
</comment>
<comment type="similarity">
    <text evidence="1">Belongs to the ketol-acid reductoisomerase family.</text>
</comment>
<sequence length="493" mass="54479">MGNYFNTLNLRQQLDQLGRCRFMEREEFADGVNFLKGKKIVIIGCGAQGLNQGLNMRDSGLDIAYALRPEAIEEKRASFQRASENGFVVGAYQQLIPTADLVINLTPDKQHSKVVADVMPLIKQGAALGYSHGLNIVEVGEKIRQDITVVMVAPKCPGTEVREEFKRGFGVPTLIAVHPENDPKGEGLAIAKAWAAATGGHRAGVLESSFVAEVKSDLMGEQTILCGMLQAGSLVCYDKLIADGKDPAYAGKLIQYGWETITEALKQGGITLMMDRLSNSAKLRAFSLSEQIKEKLDFLFKKHMDDIISGEFSRVMMEDWANGDANLLKWREQTGKTAFENAPKGENIKISEQEYFDHGVLMVAMVKAGVELAFDTMVETGIYEESAYYESLHELPLIANTIARKRLYEMNVVISDTAEYGNYLFANVAAPILAKEIIPTLKRGDLGESTPATEIDNILLRDVNDAIRQHPIELIGQELRGYMTDMKRISSQG</sequence>
<evidence type="ECO:0000255" key="1">
    <source>
        <dbReference type="HAMAP-Rule" id="MF_00435"/>
    </source>
</evidence>
<evidence type="ECO:0000255" key="2">
    <source>
        <dbReference type="PROSITE-ProRule" id="PRU01197"/>
    </source>
</evidence>
<evidence type="ECO:0000255" key="3">
    <source>
        <dbReference type="PROSITE-ProRule" id="PRU01198"/>
    </source>
</evidence>
<keyword id="KW-0028">Amino-acid biosynthesis</keyword>
<keyword id="KW-0100">Branched-chain amino acid biosynthesis</keyword>
<keyword id="KW-0460">Magnesium</keyword>
<keyword id="KW-0479">Metal-binding</keyword>
<keyword id="KW-0521">NADP</keyword>
<keyword id="KW-0560">Oxidoreductase</keyword>
<keyword id="KW-0677">Repeat</keyword>
<reference key="1">
    <citation type="journal article" date="2007" name="J. Bacteriol.">
        <title>Complete genome sequence of Haemophilus somnus (Histophilus somni) strain 129Pt and comparison to Haemophilus ducreyi 35000HP and Haemophilus influenzae Rd.</title>
        <authorList>
            <person name="Challacombe J.F."/>
            <person name="Duncan A.J."/>
            <person name="Brettin T.S."/>
            <person name="Bruce D."/>
            <person name="Chertkov O."/>
            <person name="Detter J.C."/>
            <person name="Han C.S."/>
            <person name="Misra M."/>
            <person name="Richardson P."/>
            <person name="Tapia R."/>
            <person name="Thayer N."/>
            <person name="Xie G."/>
            <person name="Inzana T.J."/>
        </authorList>
    </citation>
    <scope>NUCLEOTIDE SEQUENCE [LARGE SCALE GENOMIC DNA]</scope>
    <source>
        <strain>129Pt</strain>
    </source>
</reference>
<gene>
    <name evidence="1" type="primary">ilvC</name>
    <name type="ordered locus">HS_1671</name>
</gene>
<proteinExistence type="inferred from homology"/>
<organism>
    <name type="scientific">Histophilus somni (strain 129Pt)</name>
    <name type="common">Haemophilus somnus</name>
    <dbReference type="NCBI Taxonomy" id="205914"/>
    <lineage>
        <taxon>Bacteria</taxon>
        <taxon>Pseudomonadati</taxon>
        <taxon>Pseudomonadota</taxon>
        <taxon>Gammaproteobacteria</taxon>
        <taxon>Pasteurellales</taxon>
        <taxon>Pasteurellaceae</taxon>
        <taxon>Histophilus</taxon>
    </lineage>
</organism>
<dbReference type="EC" id="1.1.1.86" evidence="1"/>
<dbReference type="EMBL" id="CP000436">
    <property type="protein sequence ID" value="ABI25939.1"/>
    <property type="molecule type" value="Genomic_DNA"/>
</dbReference>
<dbReference type="SMR" id="Q0I511"/>
<dbReference type="KEGG" id="hso:HS_1671"/>
<dbReference type="eggNOG" id="COG0059">
    <property type="taxonomic scope" value="Bacteria"/>
</dbReference>
<dbReference type="HOGENOM" id="CLU_551905_0_0_6"/>
<dbReference type="UniPathway" id="UPA00047">
    <property type="reaction ID" value="UER00056"/>
</dbReference>
<dbReference type="UniPathway" id="UPA00049">
    <property type="reaction ID" value="UER00060"/>
</dbReference>
<dbReference type="GO" id="GO:0005829">
    <property type="term" value="C:cytosol"/>
    <property type="evidence" value="ECO:0007669"/>
    <property type="project" value="TreeGrafter"/>
</dbReference>
<dbReference type="GO" id="GO:0004455">
    <property type="term" value="F:ketol-acid reductoisomerase activity"/>
    <property type="evidence" value="ECO:0007669"/>
    <property type="project" value="UniProtKB-UniRule"/>
</dbReference>
<dbReference type="GO" id="GO:0000287">
    <property type="term" value="F:magnesium ion binding"/>
    <property type="evidence" value="ECO:0007669"/>
    <property type="project" value="UniProtKB-UniRule"/>
</dbReference>
<dbReference type="GO" id="GO:0009097">
    <property type="term" value="P:isoleucine biosynthetic process"/>
    <property type="evidence" value="ECO:0007669"/>
    <property type="project" value="UniProtKB-UniRule"/>
</dbReference>
<dbReference type="GO" id="GO:0009099">
    <property type="term" value="P:L-valine biosynthetic process"/>
    <property type="evidence" value="ECO:0007669"/>
    <property type="project" value="UniProtKB-UniRule"/>
</dbReference>
<dbReference type="FunFam" id="1.10.1040.10:FF:000007">
    <property type="entry name" value="Ketol-acid reductoisomerase (NADP(+))"/>
    <property type="match status" value="1"/>
</dbReference>
<dbReference type="FunFam" id="3.40.50.720:FF:000043">
    <property type="entry name" value="Ketol-acid reductoisomerase (NADP(+))"/>
    <property type="match status" value="1"/>
</dbReference>
<dbReference type="Gene3D" id="1.10.1040.10">
    <property type="entry name" value="N-(1-d-carboxylethyl)-l-norvaline Dehydrogenase, domain 2"/>
    <property type="match status" value="1"/>
</dbReference>
<dbReference type="Gene3D" id="3.40.50.720">
    <property type="entry name" value="NAD(P)-binding Rossmann-like Domain"/>
    <property type="match status" value="1"/>
</dbReference>
<dbReference type="HAMAP" id="MF_00435">
    <property type="entry name" value="IlvC"/>
    <property type="match status" value="1"/>
</dbReference>
<dbReference type="InterPro" id="IPR008927">
    <property type="entry name" value="6-PGluconate_DH-like_C_sf"/>
</dbReference>
<dbReference type="InterPro" id="IPR013328">
    <property type="entry name" value="6PGD_dom2"/>
</dbReference>
<dbReference type="InterPro" id="IPR013023">
    <property type="entry name" value="KARI"/>
</dbReference>
<dbReference type="InterPro" id="IPR000506">
    <property type="entry name" value="KARI_C"/>
</dbReference>
<dbReference type="InterPro" id="IPR013116">
    <property type="entry name" value="KARI_N"/>
</dbReference>
<dbReference type="InterPro" id="IPR036291">
    <property type="entry name" value="NAD(P)-bd_dom_sf"/>
</dbReference>
<dbReference type="NCBIfam" id="TIGR00465">
    <property type="entry name" value="ilvC"/>
    <property type="match status" value="1"/>
</dbReference>
<dbReference type="NCBIfam" id="NF003557">
    <property type="entry name" value="PRK05225.1"/>
    <property type="match status" value="1"/>
</dbReference>
<dbReference type="PANTHER" id="PTHR21371">
    <property type="entry name" value="KETOL-ACID REDUCTOISOMERASE, MITOCHONDRIAL"/>
    <property type="match status" value="1"/>
</dbReference>
<dbReference type="PANTHER" id="PTHR21371:SF1">
    <property type="entry name" value="KETOL-ACID REDUCTOISOMERASE, MITOCHONDRIAL"/>
    <property type="match status" value="1"/>
</dbReference>
<dbReference type="Pfam" id="PF01450">
    <property type="entry name" value="KARI_C"/>
    <property type="match status" value="2"/>
</dbReference>
<dbReference type="Pfam" id="PF07991">
    <property type="entry name" value="KARI_N"/>
    <property type="match status" value="1"/>
</dbReference>
<dbReference type="SUPFAM" id="SSF48179">
    <property type="entry name" value="6-phosphogluconate dehydrogenase C-terminal domain-like"/>
    <property type="match status" value="2"/>
</dbReference>
<dbReference type="SUPFAM" id="SSF51735">
    <property type="entry name" value="NAD(P)-binding Rossmann-fold domains"/>
    <property type="match status" value="1"/>
</dbReference>
<dbReference type="PROSITE" id="PS51851">
    <property type="entry name" value="KARI_C"/>
    <property type="match status" value="2"/>
</dbReference>
<dbReference type="PROSITE" id="PS51850">
    <property type="entry name" value="KARI_N"/>
    <property type="match status" value="1"/>
</dbReference>
<protein>
    <recommendedName>
        <fullName evidence="1">Ketol-acid reductoisomerase (NADP(+))</fullName>
        <shortName evidence="1">KARI</shortName>
        <ecNumber evidence="1">1.1.1.86</ecNumber>
    </recommendedName>
    <alternativeName>
        <fullName evidence="1">Acetohydroxy-acid isomeroreductase</fullName>
        <shortName evidence="1">AHIR</shortName>
    </alternativeName>
    <alternativeName>
        <fullName evidence="1">Alpha-keto-beta-hydroxylacyl reductoisomerase</fullName>
    </alternativeName>
    <alternativeName>
        <fullName evidence="1">Ketol-acid reductoisomerase type 2</fullName>
    </alternativeName>
    <alternativeName>
        <fullName evidence="1">Ketol-acid reductoisomerase type II</fullName>
    </alternativeName>
</protein>
<feature type="chain" id="PRO_1000050514" description="Ketol-acid reductoisomerase (NADP(+))">
    <location>
        <begin position="1"/>
        <end position="493"/>
    </location>
</feature>
<feature type="domain" description="KARI N-terminal Rossmann" evidence="2">
    <location>
        <begin position="14"/>
        <end position="208"/>
    </location>
</feature>
<feature type="domain" description="KARI C-terminal knotted 1" evidence="3">
    <location>
        <begin position="209"/>
        <end position="345"/>
    </location>
</feature>
<feature type="domain" description="KARI C-terminal knotted 2" evidence="3">
    <location>
        <begin position="346"/>
        <end position="486"/>
    </location>
</feature>
<feature type="active site" evidence="1">
    <location>
        <position position="132"/>
    </location>
</feature>
<feature type="binding site" evidence="1">
    <location>
        <begin position="45"/>
        <end position="48"/>
    </location>
    <ligand>
        <name>NADP(+)</name>
        <dbReference type="ChEBI" id="CHEBI:58349"/>
    </ligand>
</feature>
<feature type="binding site" evidence="1">
    <location>
        <position position="68"/>
    </location>
    <ligand>
        <name>NADP(+)</name>
        <dbReference type="ChEBI" id="CHEBI:58349"/>
    </ligand>
</feature>
<feature type="binding site" evidence="1">
    <location>
        <position position="76"/>
    </location>
    <ligand>
        <name>NADP(+)</name>
        <dbReference type="ChEBI" id="CHEBI:58349"/>
    </ligand>
</feature>
<feature type="binding site" evidence="1">
    <location>
        <position position="78"/>
    </location>
    <ligand>
        <name>NADP(+)</name>
        <dbReference type="ChEBI" id="CHEBI:58349"/>
    </ligand>
</feature>
<feature type="binding site" evidence="1">
    <location>
        <begin position="108"/>
        <end position="110"/>
    </location>
    <ligand>
        <name>NADP(+)</name>
        <dbReference type="ChEBI" id="CHEBI:58349"/>
    </ligand>
</feature>
<feature type="binding site" evidence="1">
    <location>
        <position position="158"/>
    </location>
    <ligand>
        <name>NADP(+)</name>
        <dbReference type="ChEBI" id="CHEBI:58349"/>
    </ligand>
</feature>
<feature type="binding site" evidence="1">
    <location>
        <position position="217"/>
    </location>
    <ligand>
        <name>Mg(2+)</name>
        <dbReference type="ChEBI" id="CHEBI:18420"/>
        <label>1</label>
    </ligand>
</feature>
<feature type="binding site" evidence="1">
    <location>
        <position position="217"/>
    </location>
    <ligand>
        <name>Mg(2+)</name>
        <dbReference type="ChEBI" id="CHEBI:18420"/>
        <label>2</label>
    </ligand>
</feature>
<feature type="binding site" evidence="1">
    <location>
        <position position="221"/>
    </location>
    <ligand>
        <name>Mg(2+)</name>
        <dbReference type="ChEBI" id="CHEBI:18420"/>
        <label>1</label>
    </ligand>
</feature>
<feature type="binding site" evidence="1">
    <location>
        <position position="390"/>
    </location>
    <ligand>
        <name>Mg(2+)</name>
        <dbReference type="ChEBI" id="CHEBI:18420"/>
        <label>2</label>
    </ligand>
</feature>
<feature type="binding site" evidence="1">
    <location>
        <position position="394"/>
    </location>
    <ligand>
        <name>Mg(2+)</name>
        <dbReference type="ChEBI" id="CHEBI:18420"/>
        <label>2</label>
    </ligand>
</feature>
<feature type="binding site" evidence="1">
    <location>
        <position position="415"/>
    </location>
    <ligand>
        <name>substrate</name>
    </ligand>
</feature>
<name>ILVC_HISS1</name>
<accession>Q0I511</accession>